<name>VG71_GAHVM</name>
<feature type="chain" id="PRO_0000406556" description="Uncharacterized gene 71 protein">
    <location>
        <begin position="1"/>
        <end position="194"/>
    </location>
</feature>
<protein>
    <recommendedName>
        <fullName>Uncharacterized gene 71 protein</fullName>
    </recommendedName>
</protein>
<keyword id="KW-1185">Reference proteome</keyword>
<organismHost>
    <name type="scientific">Gallus gallus</name>
    <name type="common">Chicken</name>
    <dbReference type="NCBI Taxonomy" id="9031"/>
</organismHost>
<proteinExistence type="predicted"/>
<gene>
    <name type="primary">MDV071</name>
</gene>
<sequence>MGIIFSNPIERTDKTLIESLRGRNMDLPGGGDLWIFANAGTSTMKFTTAGSRTSIQMYRVGRARTDGLTREFVILKGQDGNIYGVENASCIHFMSQNLHEFICKTGISQRDLMVTMGTFGGYKLNSPPKRYHKYHDSSLGRRRGISVDRSANTASCTQYEHEWSASGVLSTINPNDRILSHGSSKVRFGPTTVD</sequence>
<dbReference type="EMBL" id="AF243438">
    <property type="protein sequence ID" value="AAG14251.1"/>
    <property type="molecule type" value="Genomic_DNA"/>
</dbReference>
<dbReference type="RefSeq" id="YP_001033987.1">
    <property type="nucleotide sequence ID" value="NC_002229.3"/>
</dbReference>
<dbReference type="GeneID" id="4811532"/>
<dbReference type="KEGG" id="vg:4811532"/>
<dbReference type="Proteomes" id="UP000008072">
    <property type="component" value="Segment"/>
</dbReference>
<dbReference type="InterPro" id="IPR010741">
    <property type="entry name" value="DUF1314"/>
</dbReference>
<dbReference type="Pfam" id="PF07013">
    <property type="entry name" value="DUF1314"/>
    <property type="match status" value="1"/>
</dbReference>
<reference key="1">
    <citation type="journal article" date="2000" name="J. Virol.">
        <title>The genome of a very virulent Marek's disease virus.</title>
        <authorList>
            <person name="Tulman E.R."/>
            <person name="Afonso C.L."/>
            <person name="Lu Z."/>
            <person name="Zsak L."/>
            <person name="Rock D.L."/>
            <person name="Kutish G.F."/>
        </authorList>
    </citation>
    <scope>NUCLEOTIDE SEQUENCE [LARGE SCALE GENOMIC DNA]</scope>
</reference>
<accession>Q9E6M2</accession>
<organism>
    <name type="scientific">Gallid herpesvirus 2 (strain Chicken/Md5/ATCC VR-987)</name>
    <name type="common">GaHV-2</name>
    <name type="synonym">Marek's disease herpesvirus type 1</name>
    <dbReference type="NCBI Taxonomy" id="10389"/>
    <lineage>
        <taxon>Viruses</taxon>
        <taxon>Duplodnaviria</taxon>
        <taxon>Heunggongvirae</taxon>
        <taxon>Peploviricota</taxon>
        <taxon>Herviviricetes</taxon>
        <taxon>Herpesvirales</taxon>
        <taxon>Orthoherpesviridae</taxon>
        <taxon>Alphaherpesvirinae</taxon>
        <taxon>Mardivirus</taxon>
        <taxon>Mardivirus gallidalpha2</taxon>
        <taxon>Gallid alphaherpesvirus 2</taxon>
    </lineage>
</organism>